<sequence>MKIFNYKRVPYAEMRAFSVHILTASGSFLAFLGVVAAAEHRFIDMFWWLGLALLVDGIDGPIARKVRVKEVLPNWSGDTLDNIIDYVTYVLLPAFALYQSGMIGEPWSFVAAGMIVVSSAIYYADMGMKTDEYFFSGFPVVWNMIVFTLFVIDASATTALTVVIVSVVLTFLPINFLHPVRVKRLRPLNLGVFFLWSALGIFSLLMHFDTPEWALILFIVTGAYLYVIGAVLQFFPALGRET</sequence>
<dbReference type="EC" id="2.7.8.24" evidence="3 6"/>
<dbReference type="EMBL" id="AM236080">
    <property type="protein sequence ID" value="CAK07860.1"/>
    <property type="molecule type" value="Genomic_DNA"/>
</dbReference>
<dbReference type="SMR" id="Q1MGQ9"/>
<dbReference type="EnsemblBacteria" id="CAK07860">
    <property type="protein sequence ID" value="CAK07860"/>
    <property type="gene ID" value="RL2370"/>
</dbReference>
<dbReference type="KEGG" id="rle:RL2370"/>
<dbReference type="eggNOG" id="COG1183">
    <property type="taxonomic scope" value="Bacteria"/>
</dbReference>
<dbReference type="HOGENOM" id="CLU_086279_0_0_5"/>
<dbReference type="Proteomes" id="UP000006575">
    <property type="component" value="Chromosome"/>
</dbReference>
<dbReference type="GO" id="GO:0005886">
    <property type="term" value="C:plasma membrane"/>
    <property type="evidence" value="ECO:0007669"/>
    <property type="project" value="UniProtKB-SubCell"/>
</dbReference>
<dbReference type="GO" id="GO:0050520">
    <property type="term" value="F:phosphatidylcholine synthase activity"/>
    <property type="evidence" value="ECO:0000314"/>
    <property type="project" value="UniProtKB"/>
</dbReference>
<dbReference type="GO" id="GO:0008654">
    <property type="term" value="P:phospholipid biosynthetic process"/>
    <property type="evidence" value="ECO:0000314"/>
    <property type="project" value="UniProtKB"/>
</dbReference>
<dbReference type="FunFam" id="1.20.120.1760:FF:000009">
    <property type="entry name" value="Phosphatidylcholine synthase"/>
    <property type="match status" value="1"/>
</dbReference>
<dbReference type="Gene3D" id="1.20.120.1760">
    <property type="match status" value="1"/>
</dbReference>
<dbReference type="InterPro" id="IPR000462">
    <property type="entry name" value="CDP-OH_P_trans"/>
</dbReference>
<dbReference type="InterPro" id="IPR043130">
    <property type="entry name" value="CDP-OH_PTrfase_TM_dom"/>
</dbReference>
<dbReference type="InterPro" id="IPR026027">
    <property type="entry name" value="PcS"/>
</dbReference>
<dbReference type="NCBIfam" id="NF045884">
    <property type="entry name" value="PhCholSynAgro"/>
    <property type="match status" value="1"/>
</dbReference>
<dbReference type="Pfam" id="PF01066">
    <property type="entry name" value="CDP-OH_P_transf"/>
    <property type="match status" value="1"/>
</dbReference>
<dbReference type="PIRSF" id="PIRSF000851">
    <property type="entry name" value="PcS"/>
    <property type="match status" value="1"/>
</dbReference>
<keyword id="KW-0997">Cell inner membrane</keyword>
<keyword id="KW-1003">Cell membrane</keyword>
<keyword id="KW-0444">Lipid biosynthesis</keyword>
<keyword id="KW-0443">Lipid metabolism</keyword>
<keyword id="KW-0464">Manganese</keyword>
<keyword id="KW-0472">Membrane</keyword>
<keyword id="KW-0594">Phospholipid biosynthesis</keyword>
<keyword id="KW-1208">Phospholipid metabolism</keyword>
<keyword id="KW-0808">Transferase</keyword>
<keyword id="KW-0812">Transmembrane</keyword>
<keyword id="KW-1133">Transmembrane helix</keyword>
<name>PCS_RHIJ3</name>
<feature type="chain" id="PRO_0000425223" description="Phosphatidylcholine synthase">
    <location>
        <begin position="1"/>
        <end position="242"/>
    </location>
</feature>
<feature type="topological domain" description="Cytoplasmic" evidence="1 2">
    <location>
        <begin position="1"/>
        <end position="15"/>
    </location>
</feature>
<feature type="transmembrane region" description="Helical; Name=1" evidence="2">
    <location>
        <begin position="16"/>
        <end position="36"/>
    </location>
</feature>
<feature type="topological domain" description="Periplasmic" evidence="2">
    <location>
        <begin position="37"/>
        <end position="41"/>
    </location>
</feature>
<feature type="transmembrane region" description="Helical; Name=2" evidence="2">
    <location>
        <begin position="42"/>
        <end position="62"/>
    </location>
</feature>
<feature type="topological domain" description="Cytoplasmic" evidence="2">
    <location>
        <begin position="63"/>
        <end position="76"/>
    </location>
</feature>
<feature type="transmembrane region" description="Helical; Name=3" evidence="2">
    <location>
        <begin position="77"/>
        <end position="97"/>
    </location>
</feature>
<feature type="topological domain" description="Periplasmic" evidence="2">
    <location>
        <begin position="98"/>
        <end position="100"/>
    </location>
</feature>
<feature type="transmembrane region" description="Helical; Name=4" evidence="2">
    <location>
        <begin position="101"/>
        <end position="121"/>
    </location>
</feature>
<feature type="topological domain" description="Cytoplasmic" evidence="2">
    <location>
        <begin position="122"/>
        <end position="133"/>
    </location>
</feature>
<feature type="transmembrane region" description="Helical; Name=5" evidence="2">
    <location>
        <begin position="134"/>
        <end position="154"/>
    </location>
</feature>
<feature type="topological domain" description="Periplasmic" evidence="2">
    <location>
        <begin position="155"/>
        <end position="159"/>
    </location>
</feature>
<feature type="transmembrane region" description="Helical; Name=6" evidence="2">
    <location>
        <begin position="160"/>
        <end position="180"/>
    </location>
</feature>
<feature type="topological domain" description="Cytoplasmic" evidence="2">
    <location>
        <begin position="181"/>
        <end position="187"/>
    </location>
</feature>
<feature type="transmembrane region" description="Helical; Name=7" evidence="2">
    <location>
        <begin position="188"/>
        <end position="208"/>
    </location>
</feature>
<feature type="topological domain" description="Periplasmic" evidence="2">
    <location>
        <begin position="209"/>
        <end position="214"/>
    </location>
</feature>
<feature type="transmembrane region" description="Helical; Name=8" evidence="2">
    <location>
        <begin position="215"/>
        <end position="235"/>
    </location>
</feature>
<feature type="topological domain" description="Cytoplasmic" evidence="1 2">
    <location>
        <begin position="236"/>
        <end position="242"/>
    </location>
</feature>
<evidence type="ECO:0000250" key="1">
    <source>
        <dbReference type="UniProtKB" id="Q9KJY8"/>
    </source>
</evidence>
<evidence type="ECO:0000255" key="2"/>
<evidence type="ECO:0000269" key="3">
    <source>
    </source>
</evidence>
<evidence type="ECO:0000303" key="4">
    <source>
    </source>
</evidence>
<evidence type="ECO:0000305" key="5"/>
<evidence type="ECO:0000312" key="6">
    <source>
        <dbReference type="EMBL" id="CAK07860.1"/>
    </source>
</evidence>
<organism>
    <name type="scientific">Rhizobium johnstonii (strain DSM 114642 / LMG 32736 / 3841)</name>
    <name type="common">Rhizobium leguminosarum bv. viciae</name>
    <dbReference type="NCBI Taxonomy" id="216596"/>
    <lineage>
        <taxon>Bacteria</taxon>
        <taxon>Pseudomonadati</taxon>
        <taxon>Pseudomonadota</taxon>
        <taxon>Alphaproteobacteria</taxon>
        <taxon>Hyphomicrobiales</taxon>
        <taxon>Rhizobiaceae</taxon>
        <taxon>Rhizobium/Agrobacterium group</taxon>
        <taxon>Rhizobium</taxon>
        <taxon>Rhizobium johnstonii</taxon>
    </lineage>
</organism>
<gene>
    <name evidence="6" type="primary">pcs</name>
    <name type="ordered locus">RL2370</name>
</gene>
<comment type="function">
    <text evidence="3">Condenses choline with CDP-diglyceride to produce phosphatidylcholine and CMP.</text>
</comment>
<comment type="catalytic activity">
    <reaction evidence="3">
        <text>a CDP-1,2-diacyl-sn-glycerol + choline = a 1,2-diacyl-sn-glycero-3-phosphocholine + CMP + H(+)</text>
        <dbReference type="Rhea" id="RHEA:14597"/>
        <dbReference type="ChEBI" id="CHEBI:15354"/>
        <dbReference type="ChEBI" id="CHEBI:15378"/>
        <dbReference type="ChEBI" id="CHEBI:57643"/>
        <dbReference type="ChEBI" id="CHEBI:58332"/>
        <dbReference type="ChEBI" id="CHEBI:60377"/>
        <dbReference type="EC" id="2.7.8.24"/>
    </reaction>
</comment>
<comment type="cofactor">
    <cofactor evidence="1">
        <name>Mn(2+)</name>
        <dbReference type="ChEBI" id="CHEBI:29035"/>
    </cofactor>
</comment>
<comment type="subcellular location">
    <subcellularLocation>
        <location evidence="1">Cell inner membrane</location>
        <topology evidence="1">Multi-pass membrane protein</topology>
    </subcellularLocation>
</comment>
<comment type="similarity">
    <text evidence="2">Belongs to the CDP-alcohol phosphatidyltransferase class-I family.</text>
</comment>
<proteinExistence type="evidence at protein level"/>
<protein>
    <recommendedName>
        <fullName evidence="4 6">Phosphatidylcholine synthase</fullName>
        <shortName evidence="1">PC synthase</shortName>
        <shortName evidence="4">PCS</shortName>
        <ecNumber evidence="3 6">2.7.8.24</ecNumber>
    </recommendedName>
    <alternativeName>
        <fullName evidence="1">CDP-diglyceride-choline O-phosphatidyltransferase</fullName>
    </alternativeName>
</protein>
<accession>Q1MGQ9</accession>
<reference evidence="6" key="1">
    <citation type="journal article" date="2006" name="Genome Biol.">
        <title>The genome of Rhizobium leguminosarum has recognizable core and accessory components.</title>
        <authorList>
            <person name="Young J.P.W."/>
            <person name="Crossman L.C."/>
            <person name="Johnston A.W.B."/>
            <person name="Thomson N.R."/>
            <person name="Ghazoui Z.F."/>
            <person name="Hull K.H."/>
            <person name="Wexler M."/>
            <person name="Curson A.R.J."/>
            <person name="Todd J.D."/>
            <person name="Poole P.S."/>
            <person name="Mauchline T.H."/>
            <person name="East A.K."/>
            <person name="Quail M.A."/>
            <person name="Churcher C."/>
            <person name="Arrowsmith C."/>
            <person name="Cherevach I."/>
            <person name="Chillingworth T."/>
            <person name="Clarke K."/>
            <person name="Cronin A."/>
            <person name="Davis P."/>
            <person name="Fraser A."/>
            <person name="Hance Z."/>
            <person name="Hauser H."/>
            <person name="Jagels K."/>
            <person name="Moule S."/>
            <person name="Mungall K."/>
            <person name="Norbertczak H."/>
            <person name="Rabbinowitsch E."/>
            <person name="Sanders M."/>
            <person name="Simmonds M."/>
            <person name="Whitehead S."/>
            <person name="Parkhill J."/>
        </authorList>
    </citation>
    <scope>NUCLEOTIDE SEQUENCE [LARGE SCALE GENOMIC DNA]</scope>
    <source>
        <strain evidence="6">DSM 114642 / LMG 32736 / 3841</strain>
    </source>
</reference>
<reference evidence="5" key="2">
    <citation type="journal article" date="2003" name="Microbiology">
        <title>Pathways for phosphatidylcholine biosynthesis in bacteria.</title>
        <authorList>
            <person name="Martinez-Morales F."/>
            <person name="Schobert M."/>
            <person name="Lopez-Lara I.M."/>
            <person name="Geiger O."/>
        </authorList>
    </citation>
    <scope>FUNCTION</scope>
    <scope>CATALYTIC ACTIVITY</scope>
    <source>
        <strain evidence="3">DSM 114642 / LMG 32736 / 3841</strain>
    </source>
</reference>